<organism>
    <name type="scientific">Roseobacter denitrificans (strain ATCC 33942 / OCh 114)</name>
    <name type="common">Erythrobacter sp. (strain OCh 114)</name>
    <name type="synonym">Roseobacter denitrificans</name>
    <dbReference type="NCBI Taxonomy" id="375451"/>
    <lineage>
        <taxon>Bacteria</taxon>
        <taxon>Pseudomonadati</taxon>
        <taxon>Pseudomonadota</taxon>
        <taxon>Alphaproteobacteria</taxon>
        <taxon>Rhodobacterales</taxon>
        <taxon>Roseobacteraceae</taxon>
        <taxon>Roseobacter</taxon>
    </lineage>
</organism>
<dbReference type="EC" id="3.4.21.92" evidence="1"/>
<dbReference type="EMBL" id="CP000362">
    <property type="protein sequence ID" value="ABG32384.1"/>
    <property type="molecule type" value="Genomic_DNA"/>
</dbReference>
<dbReference type="RefSeq" id="WP_011569000.1">
    <property type="nucleotide sequence ID" value="NC_008209.1"/>
</dbReference>
<dbReference type="SMR" id="Q165F9"/>
<dbReference type="STRING" id="375451.RD1_2858"/>
<dbReference type="MEROPS" id="S14.001"/>
<dbReference type="KEGG" id="rde:RD1_2858"/>
<dbReference type="eggNOG" id="COG0740">
    <property type="taxonomic scope" value="Bacteria"/>
</dbReference>
<dbReference type="HOGENOM" id="CLU_058707_3_2_5"/>
<dbReference type="OrthoDB" id="9802800at2"/>
<dbReference type="Proteomes" id="UP000007029">
    <property type="component" value="Chromosome"/>
</dbReference>
<dbReference type="GO" id="GO:0005737">
    <property type="term" value="C:cytoplasm"/>
    <property type="evidence" value="ECO:0007669"/>
    <property type="project" value="UniProtKB-SubCell"/>
</dbReference>
<dbReference type="GO" id="GO:0009368">
    <property type="term" value="C:endopeptidase Clp complex"/>
    <property type="evidence" value="ECO:0007669"/>
    <property type="project" value="TreeGrafter"/>
</dbReference>
<dbReference type="GO" id="GO:0004176">
    <property type="term" value="F:ATP-dependent peptidase activity"/>
    <property type="evidence" value="ECO:0007669"/>
    <property type="project" value="InterPro"/>
</dbReference>
<dbReference type="GO" id="GO:0051117">
    <property type="term" value="F:ATPase binding"/>
    <property type="evidence" value="ECO:0007669"/>
    <property type="project" value="TreeGrafter"/>
</dbReference>
<dbReference type="GO" id="GO:0004252">
    <property type="term" value="F:serine-type endopeptidase activity"/>
    <property type="evidence" value="ECO:0007669"/>
    <property type="project" value="UniProtKB-UniRule"/>
</dbReference>
<dbReference type="GO" id="GO:0006515">
    <property type="term" value="P:protein quality control for misfolded or incompletely synthesized proteins"/>
    <property type="evidence" value="ECO:0007669"/>
    <property type="project" value="TreeGrafter"/>
</dbReference>
<dbReference type="CDD" id="cd07017">
    <property type="entry name" value="S14_ClpP_2"/>
    <property type="match status" value="1"/>
</dbReference>
<dbReference type="FunFam" id="3.90.226.10:FF:000001">
    <property type="entry name" value="ATP-dependent Clp protease proteolytic subunit"/>
    <property type="match status" value="1"/>
</dbReference>
<dbReference type="Gene3D" id="3.90.226.10">
    <property type="entry name" value="2-enoyl-CoA Hydratase, Chain A, domain 1"/>
    <property type="match status" value="1"/>
</dbReference>
<dbReference type="HAMAP" id="MF_00444">
    <property type="entry name" value="ClpP"/>
    <property type="match status" value="1"/>
</dbReference>
<dbReference type="InterPro" id="IPR001907">
    <property type="entry name" value="ClpP"/>
</dbReference>
<dbReference type="InterPro" id="IPR029045">
    <property type="entry name" value="ClpP/crotonase-like_dom_sf"/>
</dbReference>
<dbReference type="InterPro" id="IPR023562">
    <property type="entry name" value="ClpP/TepA"/>
</dbReference>
<dbReference type="InterPro" id="IPR033135">
    <property type="entry name" value="ClpP_His_AS"/>
</dbReference>
<dbReference type="InterPro" id="IPR018215">
    <property type="entry name" value="ClpP_Ser_AS"/>
</dbReference>
<dbReference type="NCBIfam" id="NF001368">
    <property type="entry name" value="PRK00277.1"/>
    <property type="match status" value="1"/>
</dbReference>
<dbReference type="NCBIfam" id="NF009205">
    <property type="entry name" value="PRK12553.1"/>
    <property type="match status" value="1"/>
</dbReference>
<dbReference type="PANTHER" id="PTHR10381">
    <property type="entry name" value="ATP-DEPENDENT CLP PROTEASE PROTEOLYTIC SUBUNIT"/>
    <property type="match status" value="1"/>
</dbReference>
<dbReference type="PANTHER" id="PTHR10381:SF70">
    <property type="entry name" value="ATP-DEPENDENT CLP PROTEASE PROTEOLYTIC SUBUNIT"/>
    <property type="match status" value="1"/>
</dbReference>
<dbReference type="Pfam" id="PF00574">
    <property type="entry name" value="CLP_protease"/>
    <property type="match status" value="1"/>
</dbReference>
<dbReference type="PRINTS" id="PR00127">
    <property type="entry name" value="CLPPROTEASEP"/>
</dbReference>
<dbReference type="SUPFAM" id="SSF52096">
    <property type="entry name" value="ClpP/crotonase"/>
    <property type="match status" value="1"/>
</dbReference>
<dbReference type="PROSITE" id="PS00382">
    <property type="entry name" value="CLP_PROTEASE_HIS"/>
    <property type="match status" value="1"/>
</dbReference>
<dbReference type="PROSITE" id="PS00381">
    <property type="entry name" value="CLP_PROTEASE_SER"/>
    <property type="match status" value="1"/>
</dbReference>
<reference key="1">
    <citation type="journal article" date="2007" name="J. Bacteriol.">
        <title>The complete genome sequence of Roseobacter denitrificans reveals a mixotrophic rather than photosynthetic metabolism.</title>
        <authorList>
            <person name="Swingley W.D."/>
            <person name="Sadekar S."/>
            <person name="Mastrian S.D."/>
            <person name="Matthies H.J."/>
            <person name="Hao J."/>
            <person name="Ramos H."/>
            <person name="Acharya C.R."/>
            <person name="Conrad A.L."/>
            <person name="Taylor H.L."/>
            <person name="Dejesa L.C."/>
            <person name="Shah M.K."/>
            <person name="O'Huallachain M.E."/>
            <person name="Lince M.T."/>
            <person name="Blankenship R.E."/>
            <person name="Beatty J.T."/>
            <person name="Touchman J.W."/>
        </authorList>
    </citation>
    <scope>NUCLEOTIDE SEQUENCE [LARGE SCALE GENOMIC DNA]</scope>
    <source>
        <strain>ATCC 33942 / OCh 114</strain>
    </source>
</reference>
<proteinExistence type="inferred from homology"/>
<name>CLPP_ROSDO</name>
<protein>
    <recommendedName>
        <fullName evidence="1">ATP-dependent Clp protease proteolytic subunit</fullName>
        <ecNumber evidence="1">3.4.21.92</ecNumber>
    </recommendedName>
    <alternativeName>
        <fullName evidence="1">Endopeptidase Clp</fullName>
    </alternativeName>
</protein>
<evidence type="ECO:0000255" key="1">
    <source>
        <dbReference type="HAMAP-Rule" id="MF_00444"/>
    </source>
</evidence>
<gene>
    <name evidence="1" type="primary">clpP</name>
    <name type="ordered locus">RD1_2858</name>
</gene>
<comment type="function">
    <text evidence="1">Cleaves peptides in various proteins in a process that requires ATP hydrolysis. Has a chymotrypsin-like activity. Plays a major role in the degradation of misfolded proteins.</text>
</comment>
<comment type="catalytic activity">
    <reaction evidence="1">
        <text>Hydrolysis of proteins to small peptides in the presence of ATP and magnesium. alpha-casein is the usual test substrate. In the absence of ATP, only oligopeptides shorter than five residues are hydrolyzed (such as succinyl-Leu-Tyr-|-NHMec, and Leu-Tyr-Leu-|-Tyr-Trp, in which cleavage of the -Tyr-|-Leu- and -Tyr-|-Trp bonds also occurs).</text>
        <dbReference type="EC" id="3.4.21.92"/>
    </reaction>
</comment>
<comment type="subunit">
    <text evidence="1">Fourteen ClpP subunits assemble into 2 heptameric rings which stack back to back to give a disk-like structure with a central cavity, resembling the structure of eukaryotic proteasomes.</text>
</comment>
<comment type="subcellular location">
    <subcellularLocation>
        <location evidence="1">Cytoplasm</location>
    </subcellularLocation>
</comment>
<comment type="similarity">
    <text evidence="1">Belongs to the peptidase S14 family.</text>
</comment>
<sequence length="208" mass="23078">MKDPIETYMNLVPMVVEQTSRGERAYDIFSRLLKERIIFLNGPVHDGMSSLIVAQLLHLEAENPAKEISMYINSPGGVVTSGLSIYDTMQYIKPKVSTLVIGQAASMGSLLLTAGEAGMRFSLPNSRVMVHQPSGGYQGQATDIMIHAAETQKLKDRLNEIYVKHTGQTMKKVVDALERDNFMSPEEAKEFGLIDEIVENRSKDDAET</sequence>
<keyword id="KW-0963">Cytoplasm</keyword>
<keyword id="KW-0378">Hydrolase</keyword>
<keyword id="KW-0645">Protease</keyword>
<keyword id="KW-1185">Reference proteome</keyword>
<keyword id="KW-0720">Serine protease</keyword>
<feature type="chain" id="PRO_0000252846" description="ATP-dependent Clp protease proteolytic subunit">
    <location>
        <begin position="1"/>
        <end position="208"/>
    </location>
</feature>
<feature type="active site" description="Nucleophile" evidence="1">
    <location>
        <position position="106"/>
    </location>
</feature>
<feature type="active site" evidence="1">
    <location>
        <position position="131"/>
    </location>
</feature>
<accession>Q165F9</accession>